<reference key="1">
    <citation type="submission" date="1997-02" db="EMBL/GenBank/DDBJ databases">
        <authorList>
            <person name="Hochheimer A."/>
        </authorList>
    </citation>
    <scope>NUCLEOTIDE SEQUENCE [GENOMIC DNA]</scope>
    <source>
        <strain>ATCC BAA-927 / DSM 2133 / JCM 14651 / NBRC 100331 / OCM 82 / Marburg</strain>
    </source>
</reference>
<reference key="2">
    <citation type="journal article" date="2010" name="J. Bacteriol.">
        <title>Complete genome sequence of Methanothermobacter marburgensis, a methanoarchaeon model organism.</title>
        <authorList>
            <person name="Liesegang H."/>
            <person name="Kaster A.K."/>
            <person name="Wiezer A."/>
            <person name="Goenrich M."/>
            <person name="Wollherr A."/>
            <person name="Seedorf H."/>
            <person name="Gottschalk G."/>
            <person name="Thauer R.K."/>
        </authorList>
    </citation>
    <scope>NUCLEOTIDE SEQUENCE [LARGE SCALE GENOMIC DNA]</scope>
    <source>
        <strain>ATCC BAA-927 / DSM 2133 / JCM 14651 / NBRC 100331 / OCM 82 / Marburg</strain>
    </source>
</reference>
<feature type="chain" id="PRO_0000153105" description="Nitrogenase molybdenum-iron protein beta chain">
    <location>
        <begin position="1"/>
        <end position="459"/>
    </location>
</feature>
<feature type="binding site" evidence="1">
    <location>
        <position position="21"/>
    </location>
    <ligand>
        <name>[8Fe-7S] cluster</name>
        <dbReference type="ChEBI" id="CHEBI:21143"/>
        <note>ligand shared with alpha chain</note>
    </ligand>
</feature>
<feature type="binding site" evidence="1">
    <location>
        <position position="46"/>
    </location>
    <ligand>
        <name>[8Fe-7S] cluster</name>
        <dbReference type="ChEBI" id="CHEBI:21143"/>
        <note>ligand shared with alpha chain</note>
    </ligand>
</feature>
<feature type="binding site" evidence="1">
    <location>
        <position position="104"/>
    </location>
    <ligand>
        <name>[8Fe-7S] cluster</name>
        <dbReference type="ChEBI" id="CHEBI:21143"/>
        <note>ligand shared with alpha chain</note>
    </ligand>
</feature>
<feature type="binding site" evidence="1">
    <location>
        <position position="143"/>
    </location>
    <ligand>
        <name>[8Fe-7S] cluster</name>
        <dbReference type="ChEBI" id="CHEBI:21143"/>
        <note>ligand shared with alpha chain</note>
    </ligand>
</feature>
<accession>P95296</accession>
<accession>D9PU61</accession>
<sequence>MPEINVMERGRELVVNPLVTCQPFGAMFATLGIRRGLPLVHGSQGCSTFVRYGLNRHFREPAEIAVTSLHEDAAVFGGRSNIINGVKNLVKRFRPDLVGIVTTCSSEIIGDDVDGFMRVAETELREELGDRFQTKLVHISTPSFVENHFRGYGNAIKSFIETLSREDGDCNHKLNIIPGIVNPGDIREIGHMLGLMDITPIILTDTSDPFDSPLRPSKTEQMPFYPPGGTAVPEIEDSSNSMGTLSLTMYGDEALNTLEKRFRVPGEYSMPIGVRNTDDFVRRAARISEKDVSDELLDERGILIDSMADLSSRYLFGRTAAVYGDPDMVAGISRFLCELGITPLHTCTGTDNELFIDRMKTVAAEADERINVMVKSDLRALEERLSEEPVDLMIGNSDGRLIAQDLGIPLVRVGYPVYDRVGYQRVPITGYRGAVNLLNRITNTVLREYYEPQHWKLQQ</sequence>
<gene>
    <name type="primary">nifK</name>
    <name type="ordered locus">MTBMA_c01500</name>
</gene>
<evidence type="ECO:0000250" key="1"/>
<evidence type="ECO:0000305" key="2"/>
<name>NIFK_METTM</name>
<comment type="function">
    <text>This molybdenum-iron protein is part of the nitrogenase complex that catalyzes the key enzymatic reactions in nitrogen fixation.</text>
</comment>
<comment type="catalytic activity">
    <reaction>
        <text>N2 + 8 reduced [2Fe-2S]-[ferredoxin] + 16 ATP + 16 H2O = H2 + 8 oxidized [2Fe-2S]-[ferredoxin] + 2 NH4(+) + 16 ADP + 16 phosphate + 6 H(+)</text>
        <dbReference type="Rhea" id="RHEA:21448"/>
        <dbReference type="Rhea" id="RHEA-COMP:10000"/>
        <dbReference type="Rhea" id="RHEA-COMP:10001"/>
        <dbReference type="ChEBI" id="CHEBI:15377"/>
        <dbReference type="ChEBI" id="CHEBI:15378"/>
        <dbReference type="ChEBI" id="CHEBI:17997"/>
        <dbReference type="ChEBI" id="CHEBI:18276"/>
        <dbReference type="ChEBI" id="CHEBI:28938"/>
        <dbReference type="ChEBI" id="CHEBI:30616"/>
        <dbReference type="ChEBI" id="CHEBI:33737"/>
        <dbReference type="ChEBI" id="CHEBI:33738"/>
        <dbReference type="ChEBI" id="CHEBI:43474"/>
        <dbReference type="ChEBI" id="CHEBI:456216"/>
        <dbReference type="EC" id="1.18.6.1"/>
    </reaction>
</comment>
<comment type="cofactor">
    <cofactor evidence="1">
        <name>[8Fe-7S] cluster</name>
        <dbReference type="ChEBI" id="CHEBI:21143"/>
    </cofactor>
    <text evidence="1">Binds 1 [8Fe-7S] cluster per heterodimer.</text>
</comment>
<comment type="subunit">
    <text>Tetramer of two alpha and two beta chains. Forms complex with the iron protein (nitrogenase component 2).</text>
</comment>
<comment type="similarity">
    <text evidence="2">Belongs to the NifD/NifK/NifE/NifN family.</text>
</comment>
<protein>
    <recommendedName>
        <fullName>Nitrogenase molybdenum-iron protein beta chain</fullName>
        <ecNumber>1.18.6.1</ecNumber>
    </recommendedName>
    <alternativeName>
        <fullName>Dinitrogenase</fullName>
    </alternativeName>
    <alternativeName>
        <fullName>Nitrogenase component I</fullName>
    </alternativeName>
</protein>
<keyword id="KW-0067">ATP-binding</keyword>
<keyword id="KW-0408">Iron</keyword>
<keyword id="KW-0411">Iron-sulfur</keyword>
<keyword id="KW-0479">Metal-binding</keyword>
<keyword id="KW-0535">Nitrogen fixation</keyword>
<keyword id="KW-0547">Nucleotide-binding</keyword>
<keyword id="KW-0560">Oxidoreductase</keyword>
<dbReference type="EC" id="1.18.6.1"/>
<dbReference type="EMBL" id="X87971">
    <property type="protein sequence ID" value="CAA61220.1"/>
    <property type="molecule type" value="Genomic_DNA"/>
</dbReference>
<dbReference type="EMBL" id="CP001710">
    <property type="protein sequence ID" value="ADL57759.1"/>
    <property type="molecule type" value="Genomic_DNA"/>
</dbReference>
<dbReference type="RefSeq" id="WP_013294987.1">
    <property type="nucleotide sequence ID" value="NC_014408.1"/>
</dbReference>
<dbReference type="SMR" id="P95296"/>
<dbReference type="STRING" id="79929.MTBMA_c01500"/>
<dbReference type="PaxDb" id="79929-MTBMA_c01500"/>
<dbReference type="GeneID" id="77398931"/>
<dbReference type="GeneID" id="9703855"/>
<dbReference type="KEGG" id="mmg:MTBMA_c01500"/>
<dbReference type="PATRIC" id="fig|79929.8.peg.146"/>
<dbReference type="HOGENOM" id="CLU_025876_2_0_2"/>
<dbReference type="OrthoDB" id="61861at2157"/>
<dbReference type="Proteomes" id="UP000000345">
    <property type="component" value="Chromosome"/>
</dbReference>
<dbReference type="GO" id="GO:0005524">
    <property type="term" value="F:ATP binding"/>
    <property type="evidence" value="ECO:0007669"/>
    <property type="project" value="UniProtKB-KW"/>
</dbReference>
<dbReference type="GO" id="GO:0051536">
    <property type="term" value="F:iron-sulfur cluster binding"/>
    <property type="evidence" value="ECO:0007669"/>
    <property type="project" value="UniProtKB-KW"/>
</dbReference>
<dbReference type="GO" id="GO:0046872">
    <property type="term" value="F:metal ion binding"/>
    <property type="evidence" value="ECO:0007669"/>
    <property type="project" value="UniProtKB-KW"/>
</dbReference>
<dbReference type="GO" id="GO:0016163">
    <property type="term" value="F:nitrogenase activity"/>
    <property type="evidence" value="ECO:0007669"/>
    <property type="project" value="UniProtKB-EC"/>
</dbReference>
<dbReference type="GO" id="GO:0009399">
    <property type="term" value="P:nitrogen fixation"/>
    <property type="evidence" value="ECO:0007669"/>
    <property type="project" value="UniProtKB-KW"/>
</dbReference>
<dbReference type="CDD" id="cd01965">
    <property type="entry name" value="Nitrogenase_MoFe_beta_like"/>
    <property type="match status" value="1"/>
</dbReference>
<dbReference type="Gene3D" id="3.40.50.1980">
    <property type="entry name" value="Nitrogenase molybdenum iron protein domain"/>
    <property type="match status" value="3"/>
</dbReference>
<dbReference type="Gene3D" id="1.20.89.10">
    <property type="entry name" value="Nitrogenase Molybdenum-iron Protein, subunit B, domain 4"/>
    <property type="match status" value="1"/>
</dbReference>
<dbReference type="InterPro" id="IPR050152">
    <property type="entry name" value="ChlB/BchB/BchZ"/>
</dbReference>
<dbReference type="InterPro" id="IPR000510">
    <property type="entry name" value="Nase/OxRdtase_comp1"/>
</dbReference>
<dbReference type="InterPro" id="IPR000318">
    <property type="entry name" value="Nase_comp1_CS"/>
</dbReference>
<dbReference type="PANTHER" id="PTHR33712">
    <property type="entry name" value="LIGHT-INDEPENDENT PROTOCHLOROPHYLLIDE REDUCTASE SUBUNIT B"/>
    <property type="match status" value="1"/>
</dbReference>
<dbReference type="PANTHER" id="PTHR33712:SF7">
    <property type="entry name" value="LIGHT-INDEPENDENT PROTOCHLOROPHYLLIDE REDUCTASE SUBUNIT B"/>
    <property type="match status" value="1"/>
</dbReference>
<dbReference type="Pfam" id="PF00148">
    <property type="entry name" value="Oxidored_nitro"/>
    <property type="match status" value="1"/>
</dbReference>
<dbReference type="SUPFAM" id="SSF53807">
    <property type="entry name" value="Helical backbone' metal receptor"/>
    <property type="match status" value="1"/>
</dbReference>
<dbReference type="PROSITE" id="PS00699">
    <property type="entry name" value="NITROGENASE_1_1"/>
    <property type="match status" value="1"/>
</dbReference>
<dbReference type="PROSITE" id="PS00090">
    <property type="entry name" value="NITROGENASE_1_2"/>
    <property type="match status" value="1"/>
</dbReference>
<proteinExistence type="inferred from homology"/>
<organism>
    <name type="scientific">Methanothermobacter marburgensis (strain ATCC BAA-927 / DSM 2133 / JCM 14651 / NBRC 100331 / OCM 82 / Marburg)</name>
    <name type="common">Methanobacterium thermoautotrophicum</name>
    <dbReference type="NCBI Taxonomy" id="79929"/>
    <lineage>
        <taxon>Archaea</taxon>
        <taxon>Methanobacteriati</taxon>
        <taxon>Methanobacteriota</taxon>
        <taxon>Methanomada group</taxon>
        <taxon>Methanobacteria</taxon>
        <taxon>Methanobacteriales</taxon>
        <taxon>Methanobacteriaceae</taxon>
        <taxon>Methanothermobacter</taxon>
    </lineage>
</organism>